<dbReference type="EC" id="3.1.3.11" evidence="5 7"/>
<dbReference type="EMBL" id="AL123456">
    <property type="protein sequence ID" value="CCP43852.1"/>
    <property type="molecule type" value="Genomic_DNA"/>
</dbReference>
<dbReference type="PIR" id="A70897">
    <property type="entry name" value="A70897"/>
</dbReference>
<dbReference type="RefSeq" id="NP_215615.3">
    <property type="nucleotide sequence ID" value="NC_000962.3"/>
</dbReference>
<dbReference type="RefSeq" id="WP_003898726.1">
    <property type="nucleotide sequence ID" value="NZ_NVQJ01000021.1"/>
</dbReference>
<dbReference type="PDB" id="6AYU">
    <property type="method" value="X-ray"/>
    <property type="resolution" value="2.20 A"/>
    <property type="chains" value="A/B=35-362"/>
</dbReference>
<dbReference type="PDB" id="6AYV">
    <property type="method" value="X-ray"/>
    <property type="resolution" value="2.30 A"/>
    <property type="chains" value="A/B=35-362"/>
</dbReference>
<dbReference type="PDB" id="6AYY">
    <property type="method" value="X-ray"/>
    <property type="resolution" value="2.60 A"/>
    <property type="chains" value="A/B=35-362"/>
</dbReference>
<dbReference type="PDB" id="7TXB">
    <property type="method" value="X-ray"/>
    <property type="resolution" value="3.71 A"/>
    <property type="chains" value="A/B=35-362"/>
</dbReference>
<dbReference type="PDBsum" id="6AYU"/>
<dbReference type="PDBsum" id="6AYV"/>
<dbReference type="PDBsum" id="6AYY"/>
<dbReference type="PDBsum" id="7TXB"/>
<dbReference type="SMR" id="P9WN21"/>
<dbReference type="FunCoup" id="P9WN21">
    <property type="interactions" value="117"/>
</dbReference>
<dbReference type="STRING" id="83332.Rv1099c"/>
<dbReference type="iPTMnet" id="P9WN21"/>
<dbReference type="PaxDb" id="83332-Rv1099c"/>
<dbReference type="DNASU" id="885861"/>
<dbReference type="GeneID" id="45425073"/>
<dbReference type="GeneID" id="885861"/>
<dbReference type="KEGG" id="mtu:Rv1099c"/>
<dbReference type="KEGG" id="mtv:RVBD_1099c"/>
<dbReference type="PATRIC" id="fig|83332.111.peg.1226"/>
<dbReference type="TubercuList" id="Rv1099c"/>
<dbReference type="eggNOG" id="COG1494">
    <property type="taxonomic scope" value="Bacteria"/>
</dbReference>
<dbReference type="InParanoid" id="P9WN21"/>
<dbReference type="OrthoDB" id="9779353at2"/>
<dbReference type="BRENDA" id="3.1.3.11">
    <property type="organism ID" value="3445"/>
</dbReference>
<dbReference type="SABIO-RK" id="P9WN21"/>
<dbReference type="UniPathway" id="UPA00138"/>
<dbReference type="PHI-base" id="PHI:6486"/>
<dbReference type="PHI-base" id="PHI:6487"/>
<dbReference type="Proteomes" id="UP000001584">
    <property type="component" value="Chromosome"/>
</dbReference>
<dbReference type="GO" id="GO:0005829">
    <property type="term" value="C:cytosol"/>
    <property type="evidence" value="ECO:0007005"/>
    <property type="project" value="MTBBASE"/>
</dbReference>
<dbReference type="GO" id="GO:0042132">
    <property type="term" value="F:fructose 1,6-bisphosphate 1-phosphatase activity"/>
    <property type="evidence" value="ECO:0000314"/>
    <property type="project" value="MTBBASE"/>
</dbReference>
<dbReference type="GO" id="GO:0046872">
    <property type="term" value="F:metal ion binding"/>
    <property type="evidence" value="ECO:0007669"/>
    <property type="project" value="UniProtKB-KW"/>
</dbReference>
<dbReference type="GO" id="GO:0030388">
    <property type="term" value="P:fructose 1,6-bisphosphate metabolic process"/>
    <property type="evidence" value="ECO:0000318"/>
    <property type="project" value="GO_Central"/>
</dbReference>
<dbReference type="GO" id="GO:0006094">
    <property type="term" value="P:gluconeogenesis"/>
    <property type="evidence" value="ECO:0000315"/>
    <property type="project" value="MTBBASE"/>
</dbReference>
<dbReference type="GO" id="GO:0006071">
    <property type="term" value="P:glycerol metabolic process"/>
    <property type="evidence" value="ECO:0007669"/>
    <property type="project" value="InterPro"/>
</dbReference>
<dbReference type="CDD" id="cd01516">
    <property type="entry name" value="FBPase_glpX"/>
    <property type="match status" value="1"/>
</dbReference>
<dbReference type="FunFam" id="3.40.190.90:FF:000001">
    <property type="entry name" value="Fructose-1,6-bisphosphatase"/>
    <property type="match status" value="1"/>
</dbReference>
<dbReference type="Gene3D" id="3.40.190.90">
    <property type="match status" value="1"/>
</dbReference>
<dbReference type="Gene3D" id="3.30.540.10">
    <property type="entry name" value="Fructose-1,6-Bisphosphatase, subunit A, domain 1"/>
    <property type="match status" value="1"/>
</dbReference>
<dbReference type="InterPro" id="IPR004464">
    <property type="entry name" value="FBPase_class-2/SBPase"/>
</dbReference>
<dbReference type="NCBIfam" id="TIGR00330">
    <property type="entry name" value="glpX"/>
    <property type="match status" value="1"/>
</dbReference>
<dbReference type="PANTHER" id="PTHR30447:SF0">
    <property type="entry name" value="FRUCTOSE-1,6-BISPHOSPHATASE 1 CLASS 2-RELATED"/>
    <property type="match status" value="1"/>
</dbReference>
<dbReference type="PANTHER" id="PTHR30447">
    <property type="entry name" value="FRUCTOSE-1,6-BISPHOSPHATASE CLASS 2"/>
    <property type="match status" value="1"/>
</dbReference>
<dbReference type="Pfam" id="PF03320">
    <property type="entry name" value="FBPase_glpX"/>
    <property type="match status" value="1"/>
</dbReference>
<dbReference type="PIRSF" id="PIRSF004532">
    <property type="entry name" value="GlpX"/>
    <property type="match status" value="1"/>
</dbReference>
<dbReference type="SUPFAM" id="SSF56655">
    <property type="entry name" value="Carbohydrate phosphatase"/>
    <property type="match status" value="1"/>
</dbReference>
<accession>P9WN21</accession>
<accession>L0T8L8</accession>
<accession>O53447</accession>
<accession>Q7D8U9</accession>
<organism>
    <name type="scientific">Mycobacterium tuberculosis (strain ATCC 25618 / H37Rv)</name>
    <dbReference type="NCBI Taxonomy" id="83332"/>
    <lineage>
        <taxon>Bacteria</taxon>
        <taxon>Bacillati</taxon>
        <taxon>Actinomycetota</taxon>
        <taxon>Actinomycetes</taxon>
        <taxon>Mycobacteriales</taxon>
        <taxon>Mycobacteriaceae</taxon>
        <taxon>Mycobacterium</taxon>
        <taxon>Mycobacterium tuberculosis complex</taxon>
    </lineage>
</organism>
<comment type="function">
    <text evidence="5 7">Catalyzes the hydrolysis of fructose 1,6-bisphosphate to fructose 6-phosphate (PubMed:15470127, PubMed:21451980). Seems to be the major FBPase of M.tuberculosis and to play a key role in gluconeogenesis for conversion of lipid carbon into cell wall glycans. Does not display activity against inositol 1-phosphate (PubMed:15470127).</text>
</comment>
<comment type="catalytic activity">
    <reaction evidence="5 7">
        <text>beta-D-fructose 1,6-bisphosphate + H2O = beta-D-fructose 6-phosphate + phosphate</text>
        <dbReference type="Rhea" id="RHEA:11064"/>
        <dbReference type="ChEBI" id="CHEBI:15377"/>
        <dbReference type="ChEBI" id="CHEBI:32966"/>
        <dbReference type="ChEBI" id="CHEBI:43474"/>
        <dbReference type="ChEBI" id="CHEBI:57634"/>
        <dbReference type="EC" id="3.1.3.11"/>
    </reaction>
</comment>
<comment type="cofactor">
    <cofactor evidence="7">
        <name>Mn(2+)</name>
        <dbReference type="ChEBI" id="CHEBI:29035"/>
    </cofactor>
    <cofactor evidence="7">
        <name>Mg(2+)</name>
        <dbReference type="ChEBI" id="CHEBI:18420"/>
    </cofactor>
    <text evidence="7">Has an absolute requirement of bivalent metal ions Mg(2+) or Mn(2+).</text>
</comment>
<comment type="activity regulation">
    <text evidence="5 7">Is inhibited by Li(+) and by inorganic phosphate.</text>
</comment>
<comment type="biophysicochemical properties">
    <kinetics>
        <KM evidence="5">15 uM for D-fructose 1,6-bisphosphate</KM>
        <KM evidence="7">44 uM for D-fructose 1,6-bisphosphate</KM>
        <Vmax evidence="7">1.6 umol/min/mg enzyme</Vmax>
        <text evidence="7">kcat is 1.0 sec(-1).</text>
    </kinetics>
    <phDependence>
        <text evidence="7">Optimum pH is 9.0. Is active over a pH range from 7 to 9.</text>
    </phDependence>
    <temperatureDependence>
        <text evidence="7">Retains its full activity until 30 degrees Celsius. A significant loss in the activity (65% loss) is noted at 40 degrees Celsius. Complete inactivation of the enzyme occurs at temperatures greater than 50 degrees Celsius.</text>
    </temperatureDependence>
</comment>
<comment type="pathway">
    <text evidence="15">Carbohydrate biosynthesis; gluconeogenesis.</text>
</comment>
<comment type="subunit">
    <text evidence="7 8">Homooligomer (PubMed:21451980). Probably a dimer (PubMed:21636919).</text>
</comment>
<comment type="subcellular location">
    <subcellularLocation>
        <location evidence="1">Cytoplasm</location>
    </subcellularLocation>
</comment>
<comment type="induction">
    <text evidence="5">Is expressed during exponential growth, with mRNA levels approximately half of the level of sigA.</text>
</comment>
<comment type="disruption phenotype">
    <text evidence="4 9 10">Cells lacking this gene are shown to be highly attenuated in a mouse tuberculosis model (PubMed:14569030). However, another study shows that in a mouse model of M.tuberculosis infection, cells lacking this gene are able to replicate and persist in lungs similar to the wild-type strain (PubMed:26258286). The mutant cells grow on gluconeogenic carbon sources and have detectable FBPase activity, due to the alternative FBPase (Gpm2, Rv3214) (PubMed:26258286). A third study shows that disruption of glpX leads to a growth profile comparable to that of wild-type when grown on the standard enrichment media, but growth is dysgonic with individual gluconeogenic substrates such as oleic acid, glycerol and acetate, and the mutant strain fails to efficiently replicate during the acute phase (i.e. first 30 days post-infection) of infection and begins to die thereafter (PubMed:26397812). Cells lacking both glpX and gpm2 grow as well as wild-type on glucose, but are unable to grow on any of the gluconeogenic carbon sources tested (glycerol, acetate and butyrate); the growth defect on gluconeogenic carbon sources is fully complemented by restoring expression of either GlpX or Gpm2. This double mutant lacks detectable FBPase activity and accumulates FBP. It is also severely attenuated in a mouse model of infection, as it fails to replicate in mouse lungs during the first 10 days of infection and begins to die thereafter (PubMed:26258286).</text>
</comment>
<comment type="miscellaneous">
    <text evidence="9">Gluconeogenesis is critical to M.tuberculosis ability to establish infection and is necessary for its survival in the host.</text>
</comment>
<comment type="similarity">
    <text evidence="14">Belongs to the FBPase class 2 family.</text>
</comment>
<evidence type="ECO:0000250" key="1"/>
<evidence type="ECO:0000250" key="2">
    <source>
        <dbReference type="UniProtKB" id="P0A9C9"/>
    </source>
</evidence>
<evidence type="ECO:0000256" key="3">
    <source>
        <dbReference type="SAM" id="MobiDB-lite"/>
    </source>
</evidence>
<evidence type="ECO:0000269" key="4">
    <source>
    </source>
</evidence>
<evidence type="ECO:0000269" key="5">
    <source>
    </source>
</evidence>
<evidence type="ECO:0000269" key="6">
    <source>
    </source>
</evidence>
<evidence type="ECO:0000269" key="7">
    <source>
    </source>
</evidence>
<evidence type="ECO:0000269" key="8">
    <source>
    </source>
</evidence>
<evidence type="ECO:0000269" key="9">
    <source>
    </source>
</evidence>
<evidence type="ECO:0000269" key="10">
    <source>
    </source>
</evidence>
<evidence type="ECO:0000269" key="11">
    <source>
    </source>
</evidence>
<evidence type="ECO:0000303" key="12">
    <source>
    </source>
</evidence>
<evidence type="ECO:0000303" key="13">
    <source>
    </source>
</evidence>
<evidence type="ECO:0000305" key="14"/>
<evidence type="ECO:0000305" key="15">
    <source>
    </source>
</evidence>
<evidence type="ECO:0007829" key="16">
    <source>
        <dbReference type="PDB" id="6AYU"/>
    </source>
</evidence>
<keyword id="KW-0002">3D-structure</keyword>
<keyword id="KW-0007">Acetylation</keyword>
<keyword id="KW-0119">Carbohydrate metabolism</keyword>
<keyword id="KW-0963">Cytoplasm</keyword>
<keyword id="KW-0903">Direct protein sequencing</keyword>
<keyword id="KW-0312">Gluconeogenesis</keyword>
<keyword id="KW-0378">Hydrolase</keyword>
<keyword id="KW-0464">Manganese</keyword>
<keyword id="KW-0479">Metal-binding</keyword>
<keyword id="KW-1185">Reference proteome</keyword>
<feature type="initiator methionine" description="Removed" evidence="6 11">
    <location>
        <position position="1"/>
    </location>
</feature>
<feature type="chain" id="PRO_0000403673" description="Fructose-1,6-bisphosphatase class 2">
    <location>
        <begin position="2"/>
        <end position="362"/>
    </location>
</feature>
<feature type="region of interest" description="Disordered" evidence="3">
    <location>
        <begin position="1"/>
        <end position="32"/>
    </location>
</feature>
<feature type="compositionally biased region" description="Polar residues" evidence="3">
    <location>
        <begin position="1"/>
        <end position="12"/>
    </location>
</feature>
<feature type="compositionally biased region" description="Basic and acidic residues" evidence="3">
    <location>
        <begin position="17"/>
        <end position="30"/>
    </location>
</feature>
<feature type="binding site" evidence="2">
    <location>
        <position position="61"/>
    </location>
    <ligand>
        <name>Mn(2+)</name>
        <dbReference type="ChEBI" id="CHEBI:29035"/>
        <label>1</label>
    </ligand>
</feature>
<feature type="binding site" evidence="2">
    <location>
        <position position="85"/>
    </location>
    <ligand>
        <name>Mn(2+)</name>
        <dbReference type="ChEBI" id="CHEBI:29035"/>
        <label>1</label>
    </ligand>
</feature>
<feature type="binding site" evidence="2">
    <location>
        <position position="113"/>
    </location>
    <ligand>
        <name>Mn(2+)</name>
        <dbReference type="ChEBI" id="CHEBI:29035"/>
        <label>2</label>
    </ligand>
</feature>
<feature type="binding site" evidence="2">
    <location>
        <begin position="116"/>
        <end position="118"/>
    </location>
    <ligand>
        <name>substrate</name>
    </ligand>
</feature>
<feature type="binding site" evidence="2">
    <location>
        <position position="116"/>
    </location>
    <ligand>
        <name>Mn(2+)</name>
        <dbReference type="ChEBI" id="CHEBI:29035"/>
        <label>2</label>
    </ligand>
</feature>
<feature type="binding site" evidence="2">
    <location>
        <position position="148"/>
    </location>
    <ligand>
        <name>substrate</name>
    </ligand>
</feature>
<feature type="binding site" evidence="2">
    <location>
        <begin position="193"/>
        <end position="195"/>
    </location>
    <ligand>
        <name>substrate</name>
    </ligand>
</feature>
<feature type="binding site" evidence="2">
    <location>
        <begin position="215"/>
        <end position="217"/>
    </location>
    <ligand>
        <name>substrate</name>
    </ligand>
</feature>
<feature type="binding site" evidence="2">
    <location>
        <position position="239"/>
    </location>
    <ligand>
        <name>substrate</name>
    </ligand>
</feature>
<feature type="binding site" evidence="2">
    <location>
        <position position="242"/>
    </location>
    <ligand>
        <name>Mn(2+)</name>
        <dbReference type="ChEBI" id="CHEBI:29035"/>
        <label>2</label>
    </ligand>
</feature>
<feature type="modified residue" description="N-acetylthreonine; partial" evidence="6">
    <location>
        <position position="2"/>
    </location>
</feature>
<feature type="helix" evidence="16">
    <location>
        <begin position="35"/>
        <end position="37"/>
    </location>
</feature>
<feature type="helix" evidence="16">
    <location>
        <begin position="38"/>
        <end position="49"/>
    </location>
</feature>
<feature type="turn" evidence="16">
    <location>
        <begin position="50"/>
        <end position="53"/>
    </location>
</feature>
<feature type="helix" evidence="16">
    <location>
        <begin position="57"/>
        <end position="73"/>
    </location>
</feature>
<feature type="strand" evidence="16">
    <location>
        <begin position="78"/>
        <end position="87"/>
    </location>
</feature>
<feature type="turn" evidence="16">
    <location>
        <begin position="88"/>
        <end position="90"/>
    </location>
</feature>
<feature type="strand" evidence="16">
    <location>
        <begin position="92"/>
        <end position="94"/>
    </location>
</feature>
<feature type="strand" evidence="16">
    <location>
        <begin position="99"/>
        <end position="101"/>
    </location>
</feature>
<feature type="strand" evidence="16">
    <location>
        <begin position="107"/>
        <end position="116"/>
    </location>
</feature>
<feature type="helix" evidence="16">
    <location>
        <begin position="118"/>
        <end position="123"/>
    </location>
</feature>
<feature type="strand" evidence="16">
    <location>
        <begin position="129"/>
        <end position="136"/>
    </location>
</feature>
<feature type="strand" evidence="16">
    <location>
        <begin position="147"/>
        <end position="154"/>
    </location>
</feature>
<feature type="helix" evidence="16">
    <location>
        <begin position="156"/>
        <end position="158"/>
    </location>
</feature>
<feature type="helix" evidence="16">
    <location>
        <begin position="168"/>
        <end position="178"/>
    </location>
</feature>
<feature type="helix" evidence="16">
    <location>
        <begin position="183"/>
        <end position="185"/>
    </location>
</feature>
<feature type="strand" evidence="16">
    <location>
        <begin position="187"/>
        <end position="191"/>
    </location>
</feature>
<feature type="helix" evidence="16">
    <location>
        <begin position="194"/>
        <end position="196"/>
    </location>
</feature>
<feature type="helix" evidence="16">
    <location>
        <begin position="197"/>
        <end position="206"/>
    </location>
</feature>
<feature type="strand" evidence="16">
    <location>
        <begin position="209"/>
        <end position="215"/>
    </location>
</feature>
<feature type="helix" evidence="16">
    <location>
        <begin position="217"/>
        <end position="225"/>
    </location>
</feature>
<feature type="strand" evidence="16">
    <location>
        <begin position="233"/>
        <end position="239"/>
    </location>
</feature>
<feature type="helix" evidence="16">
    <location>
        <begin position="240"/>
        <end position="253"/>
    </location>
</feature>
<feature type="strand" evidence="16">
    <location>
        <begin position="256"/>
        <end position="261"/>
    </location>
</feature>
<feature type="helix" evidence="16">
    <location>
        <begin position="266"/>
        <end position="274"/>
    </location>
</feature>
<feature type="helix" evidence="16">
    <location>
        <begin position="285"/>
        <end position="288"/>
    </location>
</feature>
<feature type="strand" evidence="16">
    <location>
        <begin position="295"/>
        <end position="302"/>
    </location>
</feature>
<feature type="strand" evidence="16">
    <location>
        <begin position="305"/>
        <end position="307"/>
    </location>
</feature>
<feature type="strand" evidence="16">
    <location>
        <begin position="314"/>
        <end position="325"/>
    </location>
</feature>
<feature type="turn" evidence="16">
    <location>
        <begin position="326"/>
        <end position="328"/>
    </location>
</feature>
<feature type="strand" evidence="16">
    <location>
        <begin position="331"/>
        <end position="341"/>
    </location>
</feature>
<feature type="strand" evidence="16">
    <location>
        <begin position="343"/>
        <end position="346"/>
    </location>
</feature>
<gene>
    <name evidence="13" type="primary">glpX</name>
    <name type="ordered locus">Rv1099c</name>
</gene>
<reference key="1">
    <citation type="journal article" date="1998" name="Nature">
        <title>Deciphering the biology of Mycobacterium tuberculosis from the complete genome sequence.</title>
        <authorList>
            <person name="Cole S.T."/>
            <person name="Brosch R."/>
            <person name="Parkhill J."/>
            <person name="Garnier T."/>
            <person name="Churcher C.M."/>
            <person name="Harris D.E."/>
            <person name="Gordon S.V."/>
            <person name="Eiglmeier K."/>
            <person name="Gas S."/>
            <person name="Barry C.E. III"/>
            <person name="Tekaia F."/>
            <person name="Badcock K."/>
            <person name="Basham D."/>
            <person name="Brown D."/>
            <person name="Chillingworth T."/>
            <person name="Connor R."/>
            <person name="Davies R.M."/>
            <person name="Devlin K."/>
            <person name="Feltwell T."/>
            <person name="Gentles S."/>
            <person name="Hamlin N."/>
            <person name="Holroyd S."/>
            <person name="Hornsby T."/>
            <person name="Jagels K."/>
            <person name="Krogh A."/>
            <person name="McLean J."/>
            <person name="Moule S."/>
            <person name="Murphy L.D."/>
            <person name="Oliver S."/>
            <person name="Osborne J."/>
            <person name="Quail M.A."/>
            <person name="Rajandream M.A."/>
            <person name="Rogers J."/>
            <person name="Rutter S."/>
            <person name="Seeger K."/>
            <person name="Skelton S."/>
            <person name="Squares S."/>
            <person name="Squares R."/>
            <person name="Sulston J.E."/>
            <person name="Taylor K."/>
            <person name="Whitehead S."/>
            <person name="Barrell B.G."/>
        </authorList>
    </citation>
    <scope>NUCLEOTIDE SEQUENCE [LARGE SCALE GENOMIC DNA]</scope>
    <source>
        <strain>ATCC 25618 / H37Rv</strain>
    </source>
</reference>
<reference key="2">
    <citation type="journal article" date="2022" name="Genomics">
        <title>Deep N-terminomics of Mycobacterium tuberculosis H37Rv extensively correct annotated encoding genes.</title>
        <authorList>
            <person name="Shi J."/>
            <person name="Meng S."/>
            <person name="Wan L."/>
            <person name="Zhang Z."/>
            <person name="Jiang S."/>
            <person name="Zhu H."/>
            <person name="Dai E."/>
            <person name="Chang L."/>
            <person name="Gao H."/>
            <person name="Wan K."/>
            <person name="Zhang L."/>
            <person name="Zhao X."/>
            <person name="Liu H."/>
            <person name="Lyu Z."/>
            <person name="Zhang Y."/>
            <person name="Xu P."/>
        </authorList>
    </citation>
    <scope>PROTEIN SEQUENCE OF 2-25</scope>
    <source>
        <strain>H37Rv</strain>
    </source>
</reference>
<reference key="3">
    <citation type="journal article" date="2003" name="Proc. Natl. Acad. Sci. U.S.A.">
        <title>Genetic requirements for mycobacterial survival during infection.</title>
        <authorList>
            <person name="Sassetti C.M."/>
            <person name="Rubin E.J."/>
        </authorList>
    </citation>
    <scope>DISRUPTION PHENOTYPE</scope>
    <source>
        <strain>ATCC 25618 / H37Rv</strain>
    </source>
</reference>
<reference key="4">
    <citation type="journal article" date="2004" name="Microbiology">
        <title>The Mycobacterium tuberculosis Rv1099c gene encodes a GlpX-like class II fructose 1,6-bisphosphatase.</title>
        <authorList>
            <person name="Movahedzadeh F."/>
            <person name="Rison S.C."/>
            <person name="Wheeler P.R."/>
            <person name="Kendall S.L."/>
            <person name="Larson T.J."/>
            <person name="Stoker N.G."/>
        </authorList>
    </citation>
    <scope>FUNCTION</scope>
    <scope>CATALYTIC ACTIVITY</scope>
    <scope>KINETIC PARAMETERS</scope>
    <scope>ACTIVITY REGULATION</scope>
    <scope>INDUCTION</scope>
    <source>
        <strain>ATCC 25618 / H37Rv</strain>
    </source>
</reference>
<reference key="5">
    <citation type="journal article" date="2007" name="Microbiology">
        <title>Experimental determination of translational starts using peptide mass mapping and tandem mass spectrometry within the proteome of Mycobacterium tuberculosis.</title>
        <authorList>
            <person name="Rison S.C."/>
            <person name="Mattow J."/>
            <person name="Jungblut P.R."/>
            <person name="Stoker N.G."/>
        </authorList>
    </citation>
    <scope>IDENTIFICATION BY MASS SPECTROMETRY</scope>
    <scope>DETERMINATION OF TRANSLATIONAL START SITE</scope>
    <scope>CLEAVAGE OF INITIATOR METHIONINE</scope>
    <scope>ACETYLATION AT THR-2</scope>
    <source>
        <strain>ATCC 25618 / H37Rv</strain>
    </source>
</reference>
<reference key="6">
    <citation type="journal article" date="2011" name="Appl. Biochem. Biotechnol.">
        <title>glpX gene of Mycobacterium tuberculosis: heterologous expression, purification, and enzymatic characterization of the encoded fructose 1,6-bisphosphatase II.</title>
        <authorList>
            <person name="Gutka H.J."/>
            <person name="Rukseree K."/>
            <person name="Wheeler P.R."/>
            <person name="Franzblau S.G."/>
            <person name="Movahedzadeh F."/>
        </authorList>
    </citation>
    <scope>FUNCTION</scope>
    <scope>CATALYTIC ACTIVITY</scope>
    <scope>BIOPHYSICOCHEMICAL PROPERTIES</scope>
    <scope>COFACTOR</scope>
    <scope>ACTIVITY REGULATION</scope>
    <scope>SUBUNIT</scope>
    <source>
        <strain>H37Rv</strain>
    </source>
</reference>
<reference key="7">
    <citation type="journal article" date="2011" name="Acta Crystallogr. F">
        <title>Crystallization and preliminary X-ray characterization of the glpX-encoded class II fructose-1,6-bisphosphatase from Mycobacterium tuberculosis.</title>
        <authorList>
            <person name="Gutka H.J."/>
            <person name="Franzblau S.G."/>
            <person name="Movahedzadeh F."/>
            <person name="Abad-Zapatero C."/>
        </authorList>
    </citation>
    <scope>CRYSTALLIZATION</scope>
    <scope>SUBUNIT</scope>
    <source>
        <strain>H37Rv</strain>
    </source>
</reference>
<reference key="8">
    <citation type="journal article" date="2011" name="Mol. Cell. Proteomics">
        <title>Proteogenomic analysis of Mycobacterium tuberculosis by high resolution mass spectrometry.</title>
        <authorList>
            <person name="Kelkar D.S."/>
            <person name="Kumar D."/>
            <person name="Kumar P."/>
            <person name="Balakrishnan L."/>
            <person name="Muthusamy B."/>
            <person name="Yadav A.K."/>
            <person name="Shrivastava P."/>
            <person name="Marimuthu A."/>
            <person name="Anand S."/>
            <person name="Sundaram H."/>
            <person name="Kingsbury R."/>
            <person name="Harsha H.C."/>
            <person name="Nair B."/>
            <person name="Prasad T.S."/>
            <person name="Chauhan D.S."/>
            <person name="Katoch K."/>
            <person name="Katoch V.M."/>
            <person name="Kumar P."/>
            <person name="Chaerkady R."/>
            <person name="Ramachandran S."/>
            <person name="Dash D."/>
            <person name="Pandey A."/>
        </authorList>
    </citation>
    <scope>IDENTIFICATION BY MASS SPECTROMETRY [LARGE SCALE ANALYSIS]</scope>
    <source>
        <strain>ATCC 25618 / H37Rv</strain>
    </source>
</reference>
<reference key="9">
    <citation type="journal article" date="2015" name="Nat. Commun.">
        <title>Two enzymes with redundant fructose bisphosphatase activity sustain gluconeogenesis and virulence in Mycobacterium tuberculosis.</title>
        <authorList>
            <person name="Ganapathy U."/>
            <person name="Marrero J."/>
            <person name="Calhoun S."/>
            <person name="Eoh H."/>
            <person name="de Carvalho L.P."/>
            <person name="Rhee K."/>
            <person name="Ehrt S."/>
        </authorList>
    </citation>
    <scope>DISRUPTION PHENOTYPE</scope>
    <scope>PATHWAY</scope>
    <source>
        <strain>H37Rv</strain>
    </source>
</reference>
<reference key="10">
    <citation type="journal article" date="2015" name="PLoS ONE">
        <title>glpx gene in Mycobacterium tuberculosis is required for in vitro gluconeogenic growth and in vivo survival.</title>
        <authorList>
            <person name="Gutka H.J."/>
            <person name="Wang Y."/>
            <person name="Franzblau S.G."/>
            <person name="Movahedzadeh F."/>
        </authorList>
    </citation>
    <scope>DISRUPTION PHENOTYPE</scope>
    <source>
        <strain>H37Rv</strain>
    </source>
</reference>
<sequence>MTAEGSGSSTAAVASHDPSHTRPSRREAPDRNLAMELVRVTEAGAMAAGRWVGRGDKEGGDGAAVDAMRELVNSVSMRGVVVIGEGEKDHAPMLYNGEEVGNGDGPECDFAVDPIDGTTLMSKGMTNAISVLAVADRGTMFDPSAVFYMNKIAVGPDAAHVLDITAPISENIRAVAKVKDLSVRDMTVCILDRPRHAQLIHDVRATGARIRLITDGDVAGAISACRPHSGTDLLAGIGGTPEGIIAAAAIRCMGGAIQAQLAPRDDAERRKALEAGYDLNQVLTTEDLVSGENVFFCATGVTDGDLLKGVRYYPGGCTTHSIVMRSKSGTVRMIEAYHRLSKLNEYSAIDFTGDSSAVYPLP</sequence>
<proteinExistence type="evidence at protein level"/>
<name>GLPX_MYCTU</name>
<protein>
    <recommendedName>
        <fullName evidence="12">Fructose-1,6-bisphosphatase class 2</fullName>
        <shortName evidence="12">FBPase class 2</shortName>
        <ecNumber evidence="5 7">3.1.3.11</ecNumber>
    </recommendedName>
    <alternativeName>
        <fullName>D-fructose-1,6-bisphosphate 1-phosphohydrolase class 2</fullName>
    </alternativeName>
    <alternativeName>
        <fullName evidence="13">Fructose 1,6-bisphosphatase II</fullName>
    </alternativeName>
</protein>